<accession>P0DTK1</accession>
<reference key="1">
    <citation type="journal article" date="1995" name="Virus Res.">
        <title>Genetic variation in Tula hantaviruses: sequence analysis of the S and M segments of strains from Central Europe.</title>
        <authorList>
            <person name="Plyusnin A."/>
            <person name="Cheng Y."/>
            <person name="Vapalahti O."/>
            <person name="Pejcoch M."/>
            <person name="Unar J."/>
            <person name="Jelinkova Z."/>
            <person name="Lehvaeslaiho H."/>
            <person name="Lundkvist A."/>
            <person name="Vaheri A."/>
        </authorList>
    </citation>
    <scope>NUCLEOTIDE SEQUENCE [GENOMIC RNA]</scope>
    <source>
        <strain>Isolate Tula/Moravia/5302Ma/94</strain>
    </source>
</reference>
<reference key="2">
    <citation type="journal article" date="1996" name="J. Gen. Virol.">
        <title>Isolation and characterization of Tula virus, a distinct serotype in the genus Hantavirus, family Bunyaviridae.</title>
        <authorList>
            <person name="Vapalahti O."/>
            <person name="Lundkvist A."/>
            <person name="Kukkonen S.K."/>
            <person name="Cheng Y."/>
            <person name="Gilljam M."/>
            <person name="Kanerva M."/>
            <person name="Manni T."/>
            <person name="Pejcoch M."/>
            <person name="Niemimaa J."/>
            <person name="Kaikusalo A."/>
            <person name="Henttonen H."/>
            <person name="Vaheri A."/>
            <person name="Plyusnin A."/>
        </authorList>
    </citation>
    <scope>NUCLEOTIDE SEQUENCE [GENOMIC RNA]</scope>
    <source>
        <strain>Isolate Tula/Moravia/5302v/95</strain>
    </source>
</reference>
<reference key="3">
    <citation type="journal article" date="2007" name="J. Med. Virol.">
        <title>Tula and Puumala hantavirus NSs ORFs are functional and the products inhibit activation of the interferon-beta promoter.</title>
        <authorList>
            <person name="Jaaskelainen K.M."/>
            <person name="Kaukinen P."/>
            <person name="Minskaya E.S."/>
            <person name="Plyusnina A."/>
            <person name="Vapalahti O."/>
            <person name="Elliott R.M."/>
            <person name="Weber F."/>
            <person name="Vaheri A."/>
            <person name="Plyusnin A."/>
        </authorList>
    </citation>
    <scope>FUNCTION</scope>
</reference>
<reference key="4">
    <citation type="journal article" date="2008" name="Virol. J.">
        <title>Tula hantavirus isolate with the full-length ORF for nonstructural protein NSs survives for more consequent passages in interferon-competent cells than the isolate having truncated NSs ORF.</title>
        <authorList>
            <person name="Jaeaeskelaeinen K.M."/>
            <person name="Plyusnina A."/>
            <person name="Lundkvist A."/>
            <person name="Vaheri A."/>
            <person name="Plyusnin A."/>
        </authorList>
    </citation>
    <scope>CHARACTERIZATION</scope>
</reference>
<reference key="5">
    <citation type="journal article" date="2010" name="Arch. Virol.">
        <title>Tula hantavirus NSs protein accumulates in the perinuclear area in infected and transfected cells.</title>
        <authorList>
            <person name="Virtanen J.O."/>
            <person name="Jaeaeskelaeinen K.M."/>
            <person name="Djupsjoebacka J."/>
            <person name="Vaheri A."/>
            <person name="Plyusnin A."/>
        </authorList>
    </citation>
    <scope>SUBCELLULAR LOCATION</scope>
</reference>
<reference key="6">
    <citation type="journal article" date="2021" name="Viruses">
        <title>Interactions of Viral Proteins from Pathogenic and Low or Non-Pathogenic Orthohantaviruses with Human Type I Interferon Signaling.</title>
        <authorList>
            <person name="Gallo G."/>
            <person name="Caignard G."/>
            <person name="Badonnel K."/>
            <person name="Chevreux G."/>
            <person name="Terrier S."/>
            <person name="Szemiel A."/>
            <person name="Roman-Sosa G."/>
            <person name="Binder F."/>
            <person name="Gu Q."/>
            <person name="Da Silva Filipe A."/>
            <person name="Ulrich R.G."/>
            <person name="Kohl A."/>
            <person name="Vitour D."/>
            <person name="Tordo N."/>
            <person name="Ermonval M."/>
        </authorList>
    </citation>
    <scope>FUNCTION</scope>
    <scope>SUBCELLULAR LOCATION</scope>
</reference>
<comment type="function">
    <text evidence="2 5">Antagonizes host type-I IFN signaling pathway.</text>
</comment>
<comment type="subunit">
    <text evidence="1">Interacts with host MAVS; this interaction may reduce MAVS ubiquitination.</text>
</comment>
<comment type="subcellular location">
    <subcellularLocation>
        <location evidence="4">Host cytoplasm</location>
        <location evidence="4">Host perinuclear region</location>
    </subcellularLocation>
    <subcellularLocation>
        <location evidence="5">Host cytoplasm</location>
    </subcellularLocation>
    <subcellularLocation>
        <location evidence="5">Host nucleus</location>
    </subcellularLocation>
</comment>
<comment type="miscellaneous">
    <text evidence="1 3 6">Expressed from the S segment by a leaky scanning mechanism (By similarity). The sequence shown is that of isolate Tula/Moravia/5302Ma/94 (Probable). The isolate Tula/Moravia/5302Ma/94 that contains the full length NSs survives for more consequent passages than the isolate Tula/Moravia/5302v/95, which contains a truncated NSs protein (PubMed:18190677).</text>
</comment>
<comment type="similarity">
    <text evidence="6">Belongs to the hantavirus NS-S protein family.</text>
</comment>
<organismHost>
    <name type="scientific">Homo sapiens</name>
    <name type="common">Human</name>
    <dbReference type="NCBI Taxonomy" id="9606"/>
</organismHost>
<organismHost>
    <name type="scientific">Microtus arvalis</name>
    <name type="common">Common vole</name>
    <name type="synonym">Field vole</name>
    <dbReference type="NCBI Taxonomy" id="47230"/>
</organismHost>
<organismHost>
    <name type="scientific">Microtus obscurus</name>
    <name type="common">Altai voie</name>
    <dbReference type="NCBI Taxonomy" id="523745"/>
</organismHost>
<keyword id="KW-1035">Host cytoplasm</keyword>
<keyword id="KW-1048">Host nucleus</keyword>
<keyword id="KW-0945">Host-virus interaction</keyword>
<keyword id="KW-1090">Inhibition of host innate immune response by virus</keyword>
<keyword id="KW-1113">Inhibition of host RLR pathway by virus</keyword>
<keyword id="KW-0899">Viral immunoevasion</keyword>
<organism>
    <name type="scientific">Tula orthohantavirus</name>
    <name type="common">TULV</name>
    <name type="synonym">Tula virus</name>
    <dbReference type="NCBI Taxonomy" id="3052503"/>
    <lineage>
        <taxon>Viruses</taxon>
        <taxon>Riboviria</taxon>
        <taxon>Orthornavirae</taxon>
        <taxon>Negarnaviricota</taxon>
        <taxon>Polyploviricotina</taxon>
        <taxon>Ellioviricetes</taxon>
        <taxon>Bunyavirales</taxon>
        <taxon>Hantaviridae</taxon>
        <taxon>Mammantavirinae</taxon>
        <taxon>Orthohantavirus</taxon>
    </lineage>
</organism>
<gene>
    <name type="primary">N</name>
</gene>
<evidence type="ECO:0000250" key="1">
    <source>
        <dbReference type="UniProtKB" id="Q80DP8"/>
    </source>
</evidence>
<evidence type="ECO:0000269" key="2">
    <source>
    </source>
</evidence>
<evidence type="ECO:0000269" key="3">
    <source>
    </source>
</evidence>
<evidence type="ECO:0000269" key="4">
    <source>
    </source>
</evidence>
<evidence type="ECO:0000269" key="5">
    <source>
    </source>
</evidence>
<evidence type="ECO:0000305" key="6"/>
<proteinExistence type="evidence at protein level"/>
<feature type="chain" id="PRO_0000455183" description="Non-structural protein NS-S">
    <location>
        <begin position="1"/>
        <end position="90"/>
    </location>
</feature>
<feature type="region of interest" description="Nucleolar signal" evidence="5">
    <location>
        <begin position="4"/>
        <end position="29"/>
    </location>
</feature>
<feature type="sequence variant" description="In strain: Tula/Moravia/5302v/95.">
    <location>
        <begin position="1"/>
        <end position="23"/>
    </location>
</feature>
<protein>
    <recommendedName>
        <fullName>Non-structural protein NS-S</fullName>
        <shortName>NSs</shortName>
    </recommendedName>
</protein>
<sequence length="90" mass="10883">MNSKLSLPGKNLKMQKRRWKPTRMMLTRAHYRVDGQLCQHWRTNWQTSRGSLQIWCQVKKWVKSLLTRLGLSRMITSRRDQAFDMEMSLM</sequence>
<name>NSS_TULV</name>
<dbReference type="EMBL" id="Z69991">
    <property type="status" value="NOT_ANNOTATED_CDS"/>
    <property type="molecule type" value="Genomic_RNA"/>
</dbReference>
<dbReference type="EMBL" id="Z49915">
    <property type="status" value="NOT_ANNOTATED_CDS"/>
    <property type="molecule type" value="Genomic_RNA"/>
</dbReference>
<dbReference type="OrthoDB" id="28967at10239"/>
<dbReference type="Proteomes" id="UP000243699">
    <property type="component" value="Genome"/>
</dbReference>
<dbReference type="GO" id="GO:0042025">
    <property type="term" value="C:host cell nucleus"/>
    <property type="evidence" value="ECO:0007669"/>
    <property type="project" value="UniProtKB-SubCell"/>
</dbReference>
<dbReference type="GO" id="GO:0044220">
    <property type="term" value="C:host cell perinuclear region of cytoplasm"/>
    <property type="evidence" value="ECO:0007669"/>
    <property type="project" value="UniProtKB-SubCell"/>
</dbReference>
<dbReference type="GO" id="GO:0052170">
    <property type="term" value="P:symbiont-mediated suppression of host innate immune response"/>
    <property type="evidence" value="ECO:0007669"/>
    <property type="project" value="UniProtKB-KW"/>
</dbReference>